<reference key="1">
    <citation type="journal article" date="2001" name="Lancet">
        <title>Whole genome sequencing of meticillin-resistant Staphylococcus aureus.</title>
        <authorList>
            <person name="Kuroda M."/>
            <person name="Ohta T."/>
            <person name="Uchiyama I."/>
            <person name="Baba T."/>
            <person name="Yuzawa H."/>
            <person name="Kobayashi I."/>
            <person name="Cui L."/>
            <person name="Oguchi A."/>
            <person name="Aoki K."/>
            <person name="Nagai Y."/>
            <person name="Lian J.-Q."/>
            <person name="Ito T."/>
            <person name="Kanamori M."/>
            <person name="Matsumaru H."/>
            <person name="Maruyama A."/>
            <person name="Murakami H."/>
            <person name="Hosoyama A."/>
            <person name="Mizutani-Ui Y."/>
            <person name="Takahashi N.K."/>
            <person name="Sawano T."/>
            <person name="Inoue R."/>
            <person name="Kaito C."/>
            <person name="Sekimizu K."/>
            <person name="Hirakawa H."/>
            <person name="Kuhara S."/>
            <person name="Goto S."/>
            <person name="Yabuzaki J."/>
            <person name="Kanehisa M."/>
            <person name="Yamashita A."/>
            <person name="Oshima K."/>
            <person name="Furuya K."/>
            <person name="Yoshino C."/>
            <person name="Shiba T."/>
            <person name="Hattori M."/>
            <person name="Ogasawara N."/>
            <person name="Hayashi H."/>
            <person name="Hiramatsu K."/>
        </authorList>
    </citation>
    <scope>NUCLEOTIDE SEQUENCE [LARGE SCALE GENOMIC DNA]</scope>
    <source>
        <strain>Mu50 / ATCC 700699</strain>
    </source>
</reference>
<proteinExistence type="inferred from homology"/>
<dbReference type="EC" id="2.7.2.2"/>
<dbReference type="EMBL" id="BA000017">
    <property type="protein sequence ID" value="BAB58794.1"/>
    <property type="status" value="ALT_INIT"/>
    <property type="molecule type" value="Genomic_DNA"/>
</dbReference>
<dbReference type="SMR" id="P63555"/>
<dbReference type="KEGG" id="sav:SAV2632"/>
<dbReference type="HOGENOM" id="CLU_076278_0_0_9"/>
<dbReference type="PhylomeDB" id="P63555"/>
<dbReference type="UniPathway" id="UPA00996">
    <property type="reaction ID" value="UER00366"/>
</dbReference>
<dbReference type="Proteomes" id="UP000002481">
    <property type="component" value="Chromosome"/>
</dbReference>
<dbReference type="GO" id="GO:0005829">
    <property type="term" value="C:cytosol"/>
    <property type="evidence" value="ECO:0007669"/>
    <property type="project" value="TreeGrafter"/>
</dbReference>
<dbReference type="GO" id="GO:0005524">
    <property type="term" value="F:ATP binding"/>
    <property type="evidence" value="ECO:0007669"/>
    <property type="project" value="UniProtKB-KW"/>
</dbReference>
<dbReference type="GO" id="GO:0008804">
    <property type="term" value="F:carbamate kinase activity"/>
    <property type="evidence" value="ECO:0007669"/>
    <property type="project" value="UniProtKB-EC"/>
</dbReference>
<dbReference type="GO" id="GO:0019546">
    <property type="term" value="P:arginine deiminase pathway"/>
    <property type="evidence" value="ECO:0007669"/>
    <property type="project" value="TreeGrafter"/>
</dbReference>
<dbReference type="CDD" id="cd04235">
    <property type="entry name" value="AAK_CK"/>
    <property type="match status" value="1"/>
</dbReference>
<dbReference type="FunFam" id="3.40.1160.10:FF:000007">
    <property type="entry name" value="Carbamate kinase"/>
    <property type="match status" value="1"/>
</dbReference>
<dbReference type="Gene3D" id="3.40.1160.10">
    <property type="entry name" value="Acetylglutamate kinase-like"/>
    <property type="match status" value="1"/>
</dbReference>
<dbReference type="InterPro" id="IPR036393">
    <property type="entry name" value="AceGlu_kinase-like_sf"/>
</dbReference>
<dbReference type="InterPro" id="IPR001048">
    <property type="entry name" value="Asp/Glu/Uridylate_kinase"/>
</dbReference>
<dbReference type="InterPro" id="IPR003964">
    <property type="entry name" value="Carb_kinase"/>
</dbReference>
<dbReference type="NCBIfam" id="TIGR00746">
    <property type="entry name" value="arcC"/>
    <property type="match status" value="1"/>
</dbReference>
<dbReference type="NCBIfam" id="NF009007">
    <property type="entry name" value="PRK12352.1"/>
    <property type="match status" value="1"/>
</dbReference>
<dbReference type="PANTHER" id="PTHR30409">
    <property type="entry name" value="CARBAMATE KINASE"/>
    <property type="match status" value="1"/>
</dbReference>
<dbReference type="PANTHER" id="PTHR30409:SF1">
    <property type="entry name" value="CARBAMATE KINASE-RELATED"/>
    <property type="match status" value="1"/>
</dbReference>
<dbReference type="Pfam" id="PF00696">
    <property type="entry name" value="AA_kinase"/>
    <property type="match status" value="1"/>
</dbReference>
<dbReference type="PIRSF" id="PIRSF000723">
    <property type="entry name" value="Carbamate_kin"/>
    <property type="match status" value="1"/>
</dbReference>
<dbReference type="PRINTS" id="PR01469">
    <property type="entry name" value="CARBMTKINASE"/>
</dbReference>
<dbReference type="SUPFAM" id="SSF53633">
    <property type="entry name" value="Carbamate kinase-like"/>
    <property type="match status" value="1"/>
</dbReference>
<sequence length="313" mass="34380">MKEKIVIALGGNAIQTKEATAEAQQTAIRRAMQNLKPLFDSPARIVISHGNGPQIGSLLIQQAKSNSDTTPAMPLDTCGAMSQGMIGYWLETEINRILTEMNSDRTVGTIVTRVEVDKDDPRFNNPTKPIGPFYTKEEVEELQKEQPDSVFKEDAGRGYRKVVASPLPQSILEHQLIRTLADGKNIVIACGGGGIPVIKKENTYEGVEAVIDKDFASEKLATLIEADTLMILTNVENVFINFNEPNQQQIDDIDVATLKKYAAQGKFAEGSMLPKIEAAIRFVESGENKKVIITNLEQAYEALIGNKGTHIHM</sequence>
<name>ARCC2_STAAM</name>
<protein>
    <recommendedName>
        <fullName>Carbamate kinase 2</fullName>
        <ecNumber>2.7.2.2</ecNumber>
    </recommendedName>
</protein>
<feature type="chain" id="PRO_0000185133" description="Carbamate kinase 2">
    <location>
        <begin position="1"/>
        <end position="313"/>
    </location>
</feature>
<evidence type="ECO:0000305" key="1"/>
<accession>P63555</accession>
<accession>Q99R05</accession>
<keyword id="KW-0056">Arginine metabolism</keyword>
<keyword id="KW-0067">ATP-binding</keyword>
<keyword id="KW-0963">Cytoplasm</keyword>
<keyword id="KW-0418">Kinase</keyword>
<keyword id="KW-0547">Nucleotide-binding</keyword>
<keyword id="KW-0808">Transferase</keyword>
<comment type="catalytic activity">
    <reaction>
        <text>hydrogencarbonate + NH4(+) + ATP = carbamoyl phosphate + ADP + H2O + H(+)</text>
        <dbReference type="Rhea" id="RHEA:10152"/>
        <dbReference type="ChEBI" id="CHEBI:15377"/>
        <dbReference type="ChEBI" id="CHEBI:15378"/>
        <dbReference type="ChEBI" id="CHEBI:17544"/>
        <dbReference type="ChEBI" id="CHEBI:28938"/>
        <dbReference type="ChEBI" id="CHEBI:30616"/>
        <dbReference type="ChEBI" id="CHEBI:58228"/>
        <dbReference type="ChEBI" id="CHEBI:456216"/>
        <dbReference type="EC" id="2.7.2.2"/>
    </reaction>
</comment>
<comment type="pathway">
    <text>Metabolic intermediate metabolism; carbamoyl phosphate degradation; CO(2) and NH(3) from carbamoyl phosphate: step 1/1.</text>
</comment>
<comment type="subcellular location">
    <subcellularLocation>
        <location evidence="1">Cytoplasm</location>
    </subcellularLocation>
</comment>
<comment type="similarity">
    <text evidence="1">Belongs to the carbamate kinase family.</text>
</comment>
<comment type="sequence caution" evidence="1">
    <conflict type="erroneous initiation">
        <sequence resource="EMBL-CDS" id="BAB58794"/>
    </conflict>
</comment>
<gene>
    <name type="primary">arcC2</name>
    <name type="ordered locus">SAV2632</name>
</gene>
<organism>
    <name type="scientific">Staphylococcus aureus (strain Mu50 / ATCC 700699)</name>
    <dbReference type="NCBI Taxonomy" id="158878"/>
    <lineage>
        <taxon>Bacteria</taxon>
        <taxon>Bacillati</taxon>
        <taxon>Bacillota</taxon>
        <taxon>Bacilli</taxon>
        <taxon>Bacillales</taxon>
        <taxon>Staphylococcaceae</taxon>
        <taxon>Staphylococcus</taxon>
    </lineage>
</organism>